<name>GSTXA_TOBAC</name>
<accession>P25317</accession>
<comment type="catalytic activity">
    <reaction>
        <text>RX + glutathione = an S-substituted glutathione + a halide anion + H(+)</text>
        <dbReference type="Rhea" id="RHEA:16437"/>
        <dbReference type="ChEBI" id="CHEBI:15378"/>
        <dbReference type="ChEBI" id="CHEBI:16042"/>
        <dbReference type="ChEBI" id="CHEBI:17792"/>
        <dbReference type="ChEBI" id="CHEBI:57925"/>
        <dbReference type="ChEBI" id="CHEBI:90779"/>
        <dbReference type="EC" id="2.5.1.18"/>
    </reaction>
</comment>
<comment type="induction">
    <text>By auxin.</text>
</comment>
<comment type="similarity">
    <text evidence="2">Belongs to the GST superfamily. HSP26 family.</text>
</comment>
<dbReference type="EC" id="2.5.1.18"/>
<dbReference type="EMBL" id="D90215">
    <property type="protein sequence ID" value="BAA14243.1"/>
    <property type="molecule type" value="Genomic_DNA"/>
</dbReference>
<dbReference type="EMBL" id="M29274">
    <property type="protein sequence ID" value="AAA67894.1"/>
    <property type="molecule type" value="mRNA"/>
</dbReference>
<dbReference type="EMBL" id="X80829">
    <property type="protein sequence ID" value="CAA56790.1"/>
    <property type="molecule type" value="Genomic_DNA"/>
</dbReference>
<dbReference type="EMBL" id="X80828">
    <property type="protein sequence ID" value="CAA56789.1"/>
    <property type="molecule type" value="mRNA"/>
</dbReference>
<dbReference type="PIR" id="A36225">
    <property type="entry name" value="A36225"/>
</dbReference>
<dbReference type="RefSeq" id="NP_001312067.1">
    <property type="nucleotide sequence ID" value="NM_001325138.1"/>
</dbReference>
<dbReference type="SMR" id="P25317"/>
<dbReference type="STRING" id="4097.P25317"/>
<dbReference type="PaxDb" id="4097-P25317"/>
<dbReference type="GeneID" id="107772524"/>
<dbReference type="KEGG" id="nta:107772524"/>
<dbReference type="OrthoDB" id="202840at2759"/>
<dbReference type="PhylomeDB" id="P25317"/>
<dbReference type="Proteomes" id="UP000084051">
    <property type="component" value="Unplaced"/>
</dbReference>
<dbReference type="GO" id="GO:0005737">
    <property type="term" value="C:cytoplasm"/>
    <property type="evidence" value="ECO:0000318"/>
    <property type="project" value="GO_Central"/>
</dbReference>
<dbReference type="GO" id="GO:0004364">
    <property type="term" value="F:glutathione transferase activity"/>
    <property type="evidence" value="ECO:0000318"/>
    <property type="project" value="GO_Central"/>
</dbReference>
<dbReference type="GO" id="GO:0009734">
    <property type="term" value="P:auxin-activated signaling pathway"/>
    <property type="evidence" value="ECO:0007669"/>
    <property type="project" value="UniProtKB-KW"/>
</dbReference>
<dbReference type="GO" id="GO:0006749">
    <property type="term" value="P:glutathione metabolic process"/>
    <property type="evidence" value="ECO:0000318"/>
    <property type="project" value="GO_Central"/>
</dbReference>
<dbReference type="CDD" id="cd03185">
    <property type="entry name" value="GST_C_Tau"/>
    <property type="match status" value="1"/>
</dbReference>
<dbReference type="CDD" id="cd03058">
    <property type="entry name" value="GST_N_Tau"/>
    <property type="match status" value="1"/>
</dbReference>
<dbReference type="FunFam" id="1.20.1050.10:FF:000018">
    <property type="entry name" value="Glutathione S-transferase U20"/>
    <property type="match status" value="1"/>
</dbReference>
<dbReference type="FunFam" id="3.40.30.10:FF:000014">
    <property type="entry name" value="Tau class glutathione S-transferase"/>
    <property type="match status" value="1"/>
</dbReference>
<dbReference type="Gene3D" id="1.20.1050.10">
    <property type="match status" value="1"/>
</dbReference>
<dbReference type="Gene3D" id="3.40.30.10">
    <property type="entry name" value="Glutaredoxin"/>
    <property type="match status" value="1"/>
</dbReference>
<dbReference type="InterPro" id="IPR010987">
    <property type="entry name" value="Glutathione-S-Trfase_C-like"/>
</dbReference>
<dbReference type="InterPro" id="IPR036282">
    <property type="entry name" value="Glutathione-S-Trfase_C_sf"/>
</dbReference>
<dbReference type="InterPro" id="IPR040079">
    <property type="entry name" value="Glutathione_S-Trfase"/>
</dbReference>
<dbReference type="InterPro" id="IPR004045">
    <property type="entry name" value="Glutathione_S-Trfase_N"/>
</dbReference>
<dbReference type="InterPro" id="IPR004046">
    <property type="entry name" value="GST_C"/>
</dbReference>
<dbReference type="InterPro" id="IPR045074">
    <property type="entry name" value="GST_C_Tau"/>
</dbReference>
<dbReference type="InterPro" id="IPR045073">
    <property type="entry name" value="Omega/Tau-like"/>
</dbReference>
<dbReference type="InterPro" id="IPR036249">
    <property type="entry name" value="Thioredoxin-like_sf"/>
</dbReference>
<dbReference type="PANTHER" id="PTHR11260:SF756">
    <property type="entry name" value="GLUTATHIONE S-TRANSFERASE PARA-RELATED"/>
    <property type="match status" value="1"/>
</dbReference>
<dbReference type="PANTHER" id="PTHR11260">
    <property type="entry name" value="GLUTATHIONE S-TRANSFERASE, GST, SUPERFAMILY, GST DOMAIN CONTAINING"/>
    <property type="match status" value="1"/>
</dbReference>
<dbReference type="Pfam" id="PF00043">
    <property type="entry name" value="GST_C"/>
    <property type="match status" value="1"/>
</dbReference>
<dbReference type="Pfam" id="PF02798">
    <property type="entry name" value="GST_N"/>
    <property type="match status" value="1"/>
</dbReference>
<dbReference type="SFLD" id="SFLDS00019">
    <property type="entry name" value="Glutathione_Transferase_(cytos"/>
    <property type="match status" value="1"/>
</dbReference>
<dbReference type="SFLD" id="SFLDG01152">
    <property type="entry name" value="Main.3:_Omega-_and_Tau-like"/>
    <property type="match status" value="1"/>
</dbReference>
<dbReference type="SUPFAM" id="SSF47616">
    <property type="entry name" value="GST C-terminal domain-like"/>
    <property type="match status" value="1"/>
</dbReference>
<dbReference type="SUPFAM" id="SSF52833">
    <property type="entry name" value="Thioredoxin-like"/>
    <property type="match status" value="1"/>
</dbReference>
<dbReference type="PROSITE" id="PS50405">
    <property type="entry name" value="GST_CTER"/>
    <property type="match status" value="1"/>
</dbReference>
<dbReference type="PROSITE" id="PS50404">
    <property type="entry name" value="GST_NTER"/>
    <property type="match status" value="1"/>
</dbReference>
<proteinExistence type="evidence at transcript level"/>
<keyword id="KW-0927">Auxin signaling pathway</keyword>
<keyword id="KW-1185">Reference proteome</keyword>
<keyword id="KW-0808">Transferase</keyword>
<sequence>MESNNVVLLDFWPSSFGMRLRIALALKGIKYEAKEENLSDKSPLLLEMNPVHKKIPILIHNSKAICESLNILEYIDEVWHDKCPLLPSDPYERSQARFWADYIDKKIYSTGRRVWSGKGEDQEEAKKEFIEILKTLEGELGNKTYFGGDNLGFVDVALVPFTSWFYSYETCANFSIEAECPKLVVWAKTCMESESVSKSLPHPHKIYGFVLELKHKLGLA</sequence>
<feature type="chain" id="PRO_0000185863" description="Probable glutathione S-transferase parA">
    <location>
        <begin position="1"/>
        <end position="220"/>
    </location>
</feature>
<feature type="domain" description="GST N-terminal">
    <location>
        <begin position="4"/>
        <end position="83"/>
    </location>
</feature>
<feature type="domain" description="GST C-terminal">
    <location>
        <begin position="89"/>
        <end position="209"/>
    </location>
</feature>
<feature type="binding site" evidence="1">
    <location>
        <position position="14"/>
    </location>
    <ligand>
        <name>glutathione</name>
        <dbReference type="ChEBI" id="CHEBI:57925"/>
    </ligand>
</feature>
<feature type="binding site" evidence="1">
    <location>
        <position position="41"/>
    </location>
    <ligand>
        <name>glutathione</name>
        <dbReference type="ChEBI" id="CHEBI:57925"/>
    </ligand>
</feature>
<feature type="binding site" evidence="1">
    <location>
        <position position="55"/>
    </location>
    <ligand>
        <name>glutathione</name>
        <dbReference type="ChEBI" id="CHEBI:57925"/>
    </ligand>
</feature>
<feature type="binding site" evidence="1">
    <location>
        <begin position="67"/>
        <end position="68"/>
    </location>
    <ligand>
        <name>glutathione</name>
        <dbReference type="ChEBI" id="CHEBI:57925"/>
    </ligand>
</feature>
<protein>
    <recommendedName>
        <fullName>Probable glutathione S-transferase parA</fullName>
        <ecNumber>2.5.1.18</ecNumber>
    </recommendedName>
    <alternativeName>
        <fullName>Auxin-regulated protein parA</fullName>
    </alternativeName>
    <alternativeName>
        <fullName>STR246C protein</fullName>
    </alternativeName>
</protein>
<organism>
    <name type="scientific">Nicotiana tabacum</name>
    <name type="common">Common tobacco</name>
    <dbReference type="NCBI Taxonomy" id="4097"/>
    <lineage>
        <taxon>Eukaryota</taxon>
        <taxon>Viridiplantae</taxon>
        <taxon>Streptophyta</taxon>
        <taxon>Embryophyta</taxon>
        <taxon>Tracheophyta</taxon>
        <taxon>Spermatophyta</taxon>
        <taxon>Magnoliopsida</taxon>
        <taxon>eudicotyledons</taxon>
        <taxon>Gunneridae</taxon>
        <taxon>Pentapetalae</taxon>
        <taxon>asterids</taxon>
        <taxon>lamiids</taxon>
        <taxon>Solanales</taxon>
        <taxon>Solanaceae</taxon>
        <taxon>Nicotianoideae</taxon>
        <taxon>Nicotianeae</taxon>
        <taxon>Nicotiana</taxon>
    </lineage>
</organism>
<evidence type="ECO:0000250" key="1"/>
<evidence type="ECO:0000305" key="2"/>
<gene>
    <name type="primary">PARA</name>
    <name type="synonym">PAR</name>
</gene>
<reference key="1">
    <citation type="journal article" date="1989" name="Proc. Natl. Acad. Sci. U.S.A.">
        <title>Isolation of an auxin-regulated gene cDNA expressed during the transition from G0 to S phase in tobacco mesophyll protoplasts.</title>
        <authorList>
            <person name="Takahashi Y."/>
            <person name="Kuroda H."/>
            <person name="Tanaka T."/>
            <person name="Machida Y."/>
            <person name="Takebe I."/>
            <person name="Nagata T."/>
        </authorList>
    </citation>
    <scope>NUCLEOTIDE SEQUENCE [MRNA]</scope>
    <source>
        <tissue>Leaf mesophyll</tissue>
    </source>
</reference>
<reference key="2">
    <citation type="journal article" date="1994" name="Plant Mol. Biol.">
        <title>Structural organization of str 246C and str 246N, plant defense-related genes from Nicotiana tabacum.</title>
        <authorList>
            <person name="Froissard D."/>
            <person name="Gough C."/>
            <person name="Czernic P."/>
            <person name="Schneider M."/>
            <person name="Toppan A."/>
            <person name="Roby D."/>
            <person name="Marco Y."/>
        </authorList>
    </citation>
    <scope>NUCLEOTIDE SEQUENCE [GENOMIC DNA / MRNA]</scope>
    <source>
        <strain>cv. NK 326</strain>
    </source>
</reference>
<reference key="3">
    <citation type="journal article" date="1990" name="Proc. Natl. Acad. Sci. U.S.A.">
        <title>Location of the cis-acting auxin-responsive region in the promoter of the par gene from tobacco mesophyll protoplasts.</title>
        <authorList>
            <person name="Takahashi Y."/>
            <person name="Niwa Y."/>
            <person name="Machida Y."/>
            <person name="Nagata T."/>
        </authorList>
    </citation>
    <scope>NUCLEOTIDE SEQUENCE [GENOMIC DNA] OF 1-106</scope>
</reference>